<feature type="initiator methionine" description="Removed" evidence="2">
    <location>
        <position position="1"/>
    </location>
</feature>
<feature type="chain" id="PRO_0000253989" description="Ras-related protein Rab-11A">
    <location>
        <begin position="2"/>
        <end position="213"/>
    </location>
</feature>
<feature type="propeptide" id="PRO_0000370805" description="Removed in mature form" evidence="6">
    <location>
        <begin position="214"/>
        <end position="216"/>
    </location>
</feature>
<feature type="region of interest" description="Disordered" evidence="7">
    <location>
        <begin position="183"/>
        <end position="207"/>
    </location>
</feature>
<feature type="short sequence motif" description="Switch 1" evidence="2">
    <location>
        <begin position="36"/>
        <end position="47"/>
    </location>
</feature>
<feature type="short sequence motif" description="Switch 2" evidence="2">
    <location>
        <begin position="67"/>
        <end position="86"/>
    </location>
</feature>
<feature type="binding site" evidence="2">
    <location>
        <position position="20"/>
    </location>
    <ligand>
        <name>GTP</name>
        <dbReference type="ChEBI" id="CHEBI:37565"/>
    </ligand>
</feature>
<feature type="binding site" evidence="2">
    <location>
        <position position="21"/>
    </location>
    <ligand>
        <name>GTP</name>
        <dbReference type="ChEBI" id="CHEBI:37565"/>
    </ligand>
</feature>
<feature type="binding site" evidence="2">
    <location>
        <position position="22"/>
    </location>
    <ligand>
        <name>GTP</name>
        <dbReference type="ChEBI" id="CHEBI:37565"/>
    </ligand>
</feature>
<feature type="binding site" evidence="2">
    <location>
        <position position="23"/>
    </location>
    <ligand>
        <name>GTP</name>
        <dbReference type="ChEBI" id="CHEBI:37565"/>
    </ligand>
</feature>
<feature type="binding site" evidence="2">
    <location>
        <position position="24"/>
    </location>
    <ligand>
        <name>GTP</name>
        <dbReference type="ChEBI" id="CHEBI:37565"/>
    </ligand>
</feature>
<feature type="binding site" evidence="2">
    <location>
        <position position="25"/>
    </location>
    <ligand>
        <name>GTP</name>
        <dbReference type="ChEBI" id="CHEBI:37565"/>
    </ligand>
</feature>
<feature type="binding site" evidence="2">
    <location>
        <position position="25"/>
    </location>
    <ligand>
        <name>Mg(2+)</name>
        <dbReference type="ChEBI" id="CHEBI:18420"/>
    </ligand>
</feature>
<feature type="binding site" evidence="2">
    <location>
        <position position="26"/>
    </location>
    <ligand>
        <name>GTP</name>
        <dbReference type="ChEBI" id="CHEBI:37565"/>
    </ligand>
</feature>
<feature type="binding site" evidence="2">
    <location>
        <position position="37"/>
    </location>
    <ligand>
        <name>GTP</name>
        <dbReference type="ChEBI" id="CHEBI:37565"/>
    </ligand>
</feature>
<feature type="binding site" evidence="2">
    <location>
        <position position="38"/>
    </location>
    <ligand>
        <name>GTP</name>
        <dbReference type="ChEBI" id="CHEBI:37565"/>
    </ligand>
</feature>
<feature type="binding site" evidence="2">
    <location>
        <position position="40"/>
    </location>
    <ligand>
        <name>GTP</name>
        <dbReference type="ChEBI" id="CHEBI:37565"/>
    </ligand>
</feature>
<feature type="binding site" evidence="2">
    <location>
        <position position="42"/>
    </location>
    <ligand>
        <name>GTP</name>
        <dbReference type="ChEBI" id="CHEBI:37565"/>
    </ligand>
</feature>
<feature type="binding site" evidence="2">
    <location>
        <position position="43"/>
    </location>
    <ligand>
        <name>GTP</name>
        <dbReference type="ChEBI" id="CHEBI:37565"/>
    </ligand>
</feature>
<feature type="binding site" evidence="2">
    <location>
        <position position="43"/>
    </location>
    <ligand>
        <name>Mg(2+)</name>
        <dbReference type="ChEBI" id="CHEBI:18420"/>
    </ligand>
</feature>
<feature type="binding site" evidence="2">
    <location>
        <position position="66"/>
    </location>
    <ligand>
        <name>Mg(2+)</name>
        <dbReference type="ChEBI" id="CHEBI:18420"/>
    </ligand>
</feature>
<feature type="binding site" evidence="2">
    <location>
        <position position="69"/>
    </location>
    <ligand>
        <name>GTP</name>
        <dbReference type="ChEBI" id="CHEBI:37565"/>
    </ligand>
</feature>
<feature type="binding site" evidence="2">
    <location>
        <position position="124"/>
    </location>
    <ligand>
        <name>GTP</name>
        <dbReference type="ChEBI" id="CHEBI:37565"/>
    </ligand>
</feature>
<feature type="binding site" evidence="2">
    <location>
        <position position="125"/>
    </location>
    <ligand>
        <name>GTP</name>
        <dbReference type="ChEBI" id="CHEBI:37565"/>
    </ligand>
</feature>
<feature type="binding site" evidence="2">
    <location>
        <position position="127"/>
    </location>
    <ligand>
        <name>GTP</name>
        <dbReference type="ChEBI" id="CHEBI:37565"/>
    </ligand>
</feature>
<feature type="binding site" evidence="2">
    <location>
        <position position="155"/>
    </location>
    <ligand>
        <name>GTP</name>
        <dbReference type="ChEBI" id="CHEBI:37565"/>
    </ligand>
</feature>
<feature type="binding site" evidence="2">
    <location>
        <position position="156"/>
    </location>
    <ligand>
        <name>GTP</name>
        <dbReference type="ChEBI" id="CHEBI:37565"/>
    </ligand>
</feature>
<feature type="modified residue" description="N-acetylglycine" evidence="2">
    <location>
        <position position="2"/>
    </location>
</feature>
<feature type="modified residue" description="Cysteine methyl ester" evidence="6">
    <location>
        <position position="213"/>
    </location>
</feature>
<feature type="lipid moiety-binding region" description="S-geranylgeranyl cysteine" evidence="2">
    <location>
        <position position="212"/>
    </location>
</feature>
<feature type="lipid moiety-binding region" description="S-geranylgeranyl cysteine" evidence="2">
    <location>
        <position position="213"/>
    </location>
</feature>
<comment type="function">
    <text evidence="1 2 3">The small GTPases Rab are key regulators of intracellular membrane trafficking, from the formation of transport vesicles to their fusion with membranes. Rabs cycle between an inactive GDP-bound form and an active GTP-bound form that is able to recruit to membranes different set of downstream effectors directly responsible for vesicle formation, movement, tethering and fusion. The small Rab GTPase RAB11A regulates endocytic recycling. Forms a functional Rab11/RAB11FIP3/dynein complex that regulates the movement of peripheral sorting endosomes (SE) along microtubule tracks toward the microtubule organizing center/centrosome, generating the endosomal recycling compartment (ERC). Acts as a major regulator of membrane delivery during cytokinesis. Together with MYO5B and RAB8A participates in epithelial cell polarization. Together with Rabin8/RAB3IP, RAB8A, the exocyst complex, PARD3, PRKCI, ANXA2, CDC42 and DNMBP promotes transcytosis of PODXL to the apical membrane initiation sites (AMIS), apical surface formation and lumenogenesis. Together with MYO5B participates in CFTR trafficking to the plasma membrane and TF (Transferrin) recycling in nonpolarized cells. Required in a complex with MYO5B and RAB11FIP2 for the transport of NPC1L1 to the plasma membrane. Participates in the sorting and basolateral transport of CDH1 from the Golgi apparatus to the plasma membrane (By similarity). Regulates the recycling of FCGRT (receptor of Fc region of monomeric IgG) to basolateral membranes (By similarity). May also play a role in melanosome transport and release from melanocytes (By similarity). Promotes Rabin8/RAB3IP preciliary vesicular trafficking to mother centriole by forming a ciliary targeting complex containing Rab11, ASAP1, Rabin8/RAB3IP, RAB11FIP3 and ARF4, thereby regulating ciliogenesis initiation. On the contrary, upon LPAR1 receptor signaling pathway activation, interaction with phosphorylated WDR44 prevents Rab11-RAB3IP-RAB11FIP3 complex formation and cilia growth. Participates in the export of a subset of neosynthesized proteins through a Rab8-Rab10-Rab11-endososomal dependent export route via interaction with WDR44 (By similarity).</text>
</comment>
<comment type="catalytic activity">
    <reaction evidence="4">
        <text>GTP + H2O = GDP + phosphate + H(+)</text>
        <dbReference type="Rhea" id="RHEA:19669"/>
        <dbReference type="ChEBI" id="CHEBI:15377"/>
        <dbReference type="ChEBI" id="CHEBI:15378"/>
        <dbReference type="ChEBI" id="CHEBI:37565"/>
        <dbReference type="ChEBI" id="CHEBI:43474"/>
        <dbReference type="ChEBI" id="CHEBI:58189"/>
        <dbReference type="EC" id="3.6.5.2"/>
    </reaction>
    <physiologicalReaction direction="left-to-right" evidence="4">
        <dbReference type="Rhea" id="RHEA:19670"/>
    </physiologicalReaction>
</comment>
<comment type="cofactor">
    <cofactor evidence="2">
        <name>Mg(2+)</name>
        <dbReference type="ChEBI" id="CHEBI:18420"/>
    </cofactor>
</comment>
<comment type="activity regulation">
    <text evidence="8">Regulated by guanine nucleotide exchange factors (GEFs) which promote the exchange of bound GDP for free GTP. Regulated by GTPase activating proteins (GAPs) which increase the GTP hydrolysis activity. Inhibited by GDP dissociation inhibitors (GDIs) which prevent Rab-GDP dissociation.</text>
</comment>
<comment type="subunit">
    <text evidence="2 3 5">Interacts (GTP-bound form) with RAB11FIPs (via their C-termini) including RAB11FIP1, RAB11FIP2, RAB11FIP3, RAB11FIP4 and RAB11FIP5 effectors (By similarity). Forms a complex with RAB11FIP3 and dynein intermediate chain DYNC1LI1; the interaction between RAB11A1 and RAB11FIP3 is direct; the complex regulates endocytic trafficking (By similarity). Interacts with EVI5; EVI5 and RAB11FIP3 may be mutually exclusive and compete for binding RAB11A (By similarity). Interacts with SGSM1, SGSM2, SGSM3 and VIPAS39 (By similarity). Interacts with EXOC6 in a GTP-dependent manner. Interacts with RAB11FIP5. Interacts with STXBP6. Interacts (GDP-bound form) with ZFYVE27 (By similarity). Interacts with BIRC6/bruce (By similarity). May interact with TBC1D14 (By similarity). Interacts with UNC119; in a cell cycle-dependent manner (By similarity). GDP-bound and nucleotide-free forms interact with SH3BP5 (By similarity). Interacts (GDP-bound form) with KIF5A in a ZFYVE27-dependent manner (By similarity). Interacts (GDP-bound form) with RELCH (By similarity). Found in a complex composed of RELCH, OSBP1 and RAB11A (By similarity). Interacts with TBC1D12 (By similarity). Interacts with DEF6 (By similarity). Interacts with ATP9A (By similarity). Forms a heterotetramer with RAB11FIP3; the GTP-bound form is preferred for binding. Forms a complex with Rabin8/RAB3IP and RAB11FIP3, probably a heterohexamer with two of each protein subunit, where Rabin8/RAB3IP and RAB11FIP3 simultaneously bind to RAB11A; the complex promotes preciliary trafficking and cilia growth. Forms a complex containing RAB11A, ASAP1, Rabin8/RAB3IP, RAP11FIP3 and ARF4; the complex promotes preciliary trafficking; the complex binds to RHO in photoreceptor cells and promotes RHO ciliary transport. Interacts (GTP-bound form) with WDR44; the interaction prevents RAB11A-RAB3IP-RAB11FIP3 complex formation (By similarity).</text>
</comment>
<comment type="subcellular location">
    <subcellularLocation>
        <location evidence="2">Cell membrane</location>
        <topology evidence="5">Lipid-anchor</topology>
    </subcellularLocation>
    <subcellularLocation>
        <location evidence="2">Endosome membrane</location>
    </subcellularLocation>
    <subcellularLocation>
        <location evidence="2">Recycling endosome membrane</location>
        <topology evidence="5">Lipid-anchor</topology>
    </subcellularLocation>
    <subcellularLocation>
        <location evidence="2">Cleavage furrow</location>
    </subcellularLocation>
    <subcellularLocation>
        <location evidence="2">Cytoplasmic vesicle</location>
        <location evidence="2">Phagosome</location>
    </subcellularLocation>
    <subcellularLocation>
        <location evidence="2">Cytoplasmic vesicle membrane</location>
    </subcellularLocation>
    <subcellularLocation>
        <location evidence="8">Golgi apparatus</location>
    </subcellularLocation>
    <subcellularLocation>
        <location evidence="2">Golgi apparatus</location>
        <location evidence="2">trans-Golgi network</location>
    </subcellularLocation>
    <subcellularLocation>
        <location evidence="2">Cytoplasmic vesicle</location>
    </subcellularLocation>
    <text evidence="2">Localized to WDR44-positive endosomes and tubules. Translocates with RAB11FIP2 from the vesicles of the endocytic recycling compartment (ERC) to the plasma membrane. Localizes to the cleavage furrow. During interphase, localized in vesicles continuously moving from peripheral sorting endosomes towards the pericentrosomal ERC. Colocalizes with PARD3, PRKCI, EXOC5, OCLN, PODXL and RAB8A in apical membrane initiation sites (AMIS) during the generation of apical surface and lumenogenesis. Localized to rhodopsin transport carriers when interacting with RAB11AFIP3 and ASAP1 in photoreceptors. Colocalizes with RAB11AFIP1 on punctate vesicles.</text>
</comment>
<comment type="domain">
    <text evidence="2">Switch 1, switch 2 and the interswitch regions are characteristic of Rab GTPases and mediate the interactions with Rab downstream effectors. The switch regions undergo conformational changes upon nucleotide binding which drives interaction with specific sets of effector proteins, with most effectors only binding to GTP-bound Rab.</text>
</comment>
<comment type="similarity">
    <text evidence="8">Belongs to the small GTPase superfamily. Rab family.</text>
</comment>
<accession>Q2TA29</accession>
<keyword id="KW-0007">Acetylation</keyword>
<keyword id="KW-0131">Cell cycle</keyword>
<keyword id="KW-1003">Cell membrane</keyword>
<keyword id="KW-0968">Cytoplasmic vesicle</keyword>
<keyword id="KW-0967">Endosome</keyword>
<keyword id="KW-0333">Golgi apparatus</keyword>
<keyword id="KW-0342">GTP-binding</keyword>
<keyword id="KW-0378">Hydrolase</keyword>
<keyword id="KW-0449">Lipoprotein</keyword>
<keyword id="KW-0460">Magnesium</keyword>
<keyword id="KW-0472">Membrane</keyword>
<keyword id="KW-0479">Metal-binding</keyword>
<keyword id="KW-0488">Methylation</keyword>
<keyword id="KW-0547">Nucleotide-binding</keyword>
<keyword id="KW-0636">Prenylation</keyword>
<keyword id="KW-0653">Protein transport</keyword>
<keyword id="KW-1185">Reference proteome</keyword>
<keyword id="KW-0813">Transport</keyword>
<proteinExistence type="evidence at transcript level"/>
<gene>
    <name evidence="3" type="primary">RAB11A</name>
    <name evidence="3" type="synonym">RAB11</name>
</gene>
<dbReference type="EC" id="3.6.5.2" evidence="4"/>
<dbReference type="EMBL" id="BC111143">
    <property type="protein sequence ID" value="AAI11144.1"/>
    <property type="molecule type" value="mRNA"/>
</dbReference>
<dbReference type="RefSeq" id="NP_001033251.1">
    <property type="nucleotide sequence ID" value="NM_001038162.2"/>
</dbReference>
<dbReference type="SMR" id="Q2TA29"/>
<dbReference type="FunCoup" id="Q2TA29">
    <property type="interactions" value="1541"/>
</dbReference>
<dbReference type="STRING" id="9913.ENSBTAP00000025235"/>
<dbReference type="PaxDb" id="9913-ENSBTAP00000025235"/>
<dbReference type="PeptideAtlas" id="Q2TA29"/>
<dbReference type="GeneID" id="534708"/>
<dbReference type="KEGG" id="bta:534708"/>
<dbReference type="CTD" id="8766"/>
<dbReference type="eggNOG" id="KOG0087">
    <property type="taxonomic scope" value="Eukaryota"/>
</dbReference>
<dbReference type="InParanoid" id="Q2TA29"/>
<dbReference type="OrthoDB" id="9989112at2759"/>
<dbReference type="Proteomes" id="UP000009136">
    <property type="component" value="Unplaced"/>
</dbReference>
<dbReference type="GO" id="GO:0032154">
    <property type="term" value="C:cleavage furrow"/>
    <property type="evidence" value="ECO:0000250"/>
    <property type="project" value="UniProtKB"/>
</dbReference>
<dbReference type="GO" id="GO:0030666">
    <property type="term" value="C:endocytic vesicle membrane"/>
    <property type="evidence" value="ECO:0000250"/>
    <property type="project" value="UniProtKB"/>
</dbReference>
<dbReference type="GO" id="GO:0005794">
    <property type="term" value="C:Golgi apparatus"/>
    <property type="evidence" value="ECO:0000318"/>
    <property type="project" value="GO_Central"/>
</dbReference>
<dbReference type="GO" id="GO:0000139">
    <property type="term" value="C:Golgi membrane"/>
    <property type="evidence" value="ECO:0000250"/>
    <property type="project" value="UniProtKB"/>
</dbReference>
<dbReference type="GO" id="GO:0045335">
    <property type="term" value="C:phagocytic vesicle"/>
    <property type="evidence" value="ECO:0000250"/>
    <property type="project" value="UniProtKB"/>
</dbReference>
<dbReference type="GO" id="GO:0098837">
    <property type="term" value="C:postsynaptic recycling endosome"/>
    <property type="evidence" value="ECO:0000318"/>
    <property type="project" value="GO_Central"/>
</dbReference>
<dbReference type="GO" id="GO:0055037">
    <property type="term" value="C:recycling endosome"/>
    <property type="evidence" value="ECO:0000250"/>
    <property type="project" value="UniProtKB"/>
</dbReference>
<dbReference type="GO" id="GO:0055038">
    <property type="term" value="C:recycling endosome membrane"/>
    <property type="evidence" value="ECO:0007669"/>
    <property type="project" value="UniProtKB-SubCell"/>
</dbReference>
<dbReference type="GO" id="GO:0032588">
    <property type="term" value="C:trans-Golgi network membrane"/>
    <property type="evidence" value="ECO:0000250"/>
    <property type="project" value="UniProtKB"/>
</dbReference>
<dbReference type="GO" id="GO:0030133">
    <property type="term" value="C:transport vesicle"/>
    <property type="evidence" value="ECO:0000318"/>
    <property type="project" value="GO_Central"/>
</dbReference>
<dbReference type="GO" id="GO:0051959">
    <property type="term" value="F:dynein light intermediate chain binding"/>
    <property type="evidence" value="ECO:0000250"/>
    <property type="project" value="UniProtKB"/>
</dbReference>
<dbReference type="GO" id="GO:0003925">
    <property type="term" value="F:G protein activity"/>
    <property type="evidence" value="ECO:0007669"/>
    <property type="project" value="UniProtKB-EC"/>
</dbReference>
<dbReference type="GO" id="GO:0005525">
    <property type="term" value="F:GTP binding"/>
    <property type="evidence" value="ECO:0000318"/>
    <property type="project" value="GO_Central"/>
</dbReference>
<dbReference type="GO" id="GO:0003924">
    <property type="term" value="F:GTPase activity"/>
    <property type="evidence" value="ECO:0000250"/>
    <property type="project" value="UniProtKB"/>
</dbReference>
<dbReference type="GO" id="GO:0006887">
    <property type="term" value="P:exocytosis"/>
    <property type="evidence" value="ECO:0000318"/>
    <property type="project" value="GO_Central"/>
</dbReference>
<dbReference type="GO" id="GO:0032402">
    <property type="term" value="P:melanosome transport"/>
    <property type="evidence" value="ECO:0000250"/>
    <property type="project" value="UniProtKB"/>
</dbReference>
<dbReference type="GO" id="GO:0031175">
    <property type="term" value="P:neuron projection development"/>
    <property type="evidence" value="ECO:0000250"/>
    <property type="project" value="UniProtKB"/>
</dbReference>
<dbReference type="GO" id="GO:0098887">
    <property type="term" value="P:neurotransmitter receptor transport, endosome to postsynaptic membrane"/>
    <property type="evidence" value="ECO:0000318"/>
    <property type="project" value="GO_Central"/>
</dbReference>
<dbReference type="GO" id="GO:0061512">
    <property type="term" value="P:protein localization to cilium"/>
    <property type="evidence" value="ECO:0000250"/>
    <property type="project" value="UniProtKB"/>
</dbReference>
<dbReference type="GO" id="GO:0072659">
    <property type="term" value="P:protein localization to plasma membrane"/>
    <property type="evidence" value="ECO:0000250"/>
    <property type="project" value="UniProtKB"/>
</dbReference>
<dbReference type="GO" id="GO:1902017">
    <property type="term" value="P:regulation of cilium assembly"/>
    <property type="evidence" value="ECO:0000250"/>
    <property type="project" value="UniProtKB"/>
</dbReference>
<dbReference type="GO" id="GO:1902954">
    <property type="term" value="P:regulation of early endosome to recycling endosome transport"/>
    <property type="evidence" value="ECO:0000250"/>
    <property type="project" value="UniProtKB"/>
</dbReference>
<dbReference type="GO" id="GO:2001135">
    <property type="term" value="P:regulation of endocytic recycling"/>
    <property type="evidence" value="ECO:0000250"/>
    <property type="project" value="UniProtKB"/>
</dbReference>
<dbReference type="GO" id="GO:1904779">
    <property type="term" value="P:regulation of protein localization to centrosome"/>
    <property type="evidence" value="ECO:0000250"/>
    <property type="project" value="UniProtKB"/>
</dbReference>
<dbReference type="CDD" id="cd01868">
    <property type="entry name" value="Rab11_like"/>
    <property type="match status" value="1"/>
</dbReference>
<dbReference type="FunFam" id="3.40.50.300:FF:000085">
    <property type="entry name" value="Putative ras-related protein rab-11a"/>
    <property type="match status" value="1"/>
</dbReference>
<dbReference type="Gene3D" id="3.40.50.300">
    <property type="entry name" value="P-loop containing nucleotide triphosphate hydrolases"/>
    <property type="match status" value="1"/>
</dbReference>
<dbReference type="InterPro" id="IPR027417">
    <property type="entry name" value="P-loop_NTPase"/>
</dbReference>
<dbReference type="InterPro" id="IPR050209">
    <property type="entry name" value="Rab_GTPases_membrane_traffic"/>
</dbReference>
<dbReference type="InterPro" id="IPR005225">
    <property type="entry name" value="Small_GTP-bd"/>
</dbReference>
<dbReference type="InterPro" id="IPR001806">
    <property type="entry name" value="Small_GTPase"/>
</dbReference>
<dbReference type="NCBIfam" id="TIGR00231">
    <property type="entry name" value="small_GTP"/>
    <property type="match status" value="1"/>
</dbReference>
<dbReference type="PANTHER" id="PTHR47979">
    <property type="entry name" value="DRAB11-RELATED"/>
    <property type="match status" value="1"/>
</dbReference>
<dbReference type="Pfam" id="PF00071">
    <property type="entry name" value="Ras"/>
    <property type="match status" value="1"/>
</dbReference>
<dbReference type="PRINTS" id="PR00449">
    <property type="entry name" value="RASTRNSFRMNG"/>
</dbReference>
<dbReference type="SMART" id="SM00175">
    <property type="entry name" value="RAB"/>
    <property type="match status" value="1"/>
</dbReference>
<dbReference type="SMART" id="SM00176">
    <property type="entry name" value="RAN"/>
    <property type="match status" value="1"/>
</dbReference>
<dbReference type="SMART" id="SM00173">
    <property type="entry name" value="RAS"/>
    <property type="match status" value="1"/>
</dbReference>
<dbReference type="SMART" id="SM00174">
    <property type="entry name" value="RHO"/>
    <property type="match status" value="1"/>
</dbReference>
<dbReference type="SUPFAM" id="SSF52540">
    <property type="entry name" value="P-loop containing nucleoside triphosphate hydrolases"/>
    <property type="match status" value="1"/>
</dbReference>
<dbReference type="PROSITE" id="PS51419">
    <property type="entry name" value="RAB"/>
    <property type="match status" value="1"/>
</dbReference>
<sequence>MGTRDDEYDYLFKVVLIGDSGVGKSNLLSRFTRNEFNLESKSTIGVEFATRSIQVDGKTIKAQIWDTAGQERYRAITSAYYRGAVGALLVYDIAKHLTYENVERWLKELRDHADSNIVIMLVGNKSDLRHLRAVPTDEARAFAEKNGLSFIETSALDYTNVEAAFQTILTEIYRIVSQKQMSDRRENDMSPSNNVVPIHVPPTTENKPKVQCCQNI</sequence>
<evidence type="ECO:0000250" key="1">
    <source>
        <dbReference type="UniProtKB" id="P62490"/>
    </source>
</evidence>
<evidence type="ECO:0000250" key="2">
    <source>
        <dbReference type="UniProtKB" id="P62491"/>
    </source>
</evidence>
<evidence type="ECO:0000250" key="3">
    <source>
        <dbReference type="UniProtKB" id="P62492"/>
    </source>
</evidence>
<evidence type="ECO:0000250" key="4">
    <source>
        <dbReference type="UniProtKB" id="P62493"/>
    </source>
</evidence>
<evidence type="ECO:0000250" key="5">
    <source>
        <dbReference type="UniProtKB" id="P62494"/>
    </source>
</evidence>
<evidence type="ECO:0000255" key="6"/>
<evidence type="ECO:0000256" key="7">
    <source>
        <dbReference type="SAM" id="MobiDB-lite"/>
    </source>
</evidence>
<evidence type="ECO:0000305" key="8"/>
<protein>
    <recommendedName>
        <fullName evidence="3">Ras-related protein Rab-11A</fullName>
        <shortName evidence="3">Rab-11</shortName>
        <ecNumber evidence="4">3.6.5.2</ecNumber>
    </recommendedName>
</protein>
<reference key="1">
    <citation type="submission" date="2005-12" db="EMBL/GenBank/DDBJ databases">
        <authorList>
            <consortium name="NIH - Mammalian Gene Collection (MGC) project"/>
        </authorList>
    </citation>
    <scope>NUCLEOTIDE SEQUENCE [LARGE SCALE MRNA]</scope>
    <source>
        <strain>Crossbred X Angus</strain>
        <tissue>Liver</tissue>
    </source>
</reference>
<name>RB11A_BOVIN</name>
<organism>
    <name type="scientific">Bos taurus</name>
    <name type="common">Bovine</name>
    <dbReference type="NCBI Taxonomy" id="9913"/>
    <lineage>
        <taxon>Eukaryota</taxon>
        <taxon>Metazoa</taxon>
        <taxon>Chordata</taxon>
        <taxon>Craniata</taxon>
        <taxon>Vertebrata</taxon>
        <taxon>Euteleostomi</taxon>
        <taxon>Mammalia</taxon>
        <taxon>Eutheria</taxon>
        <taxon>Laurasiatheria</taxon>
        <taxon>Artiodactyla</taxon>
        <taxon>Ruminantia</taxon>
        <taxon>Pecora</taxon>
        <taxon>Bovidae</taxon>
        <taxon>Bovinae</taxon>
        <taxon>Bos</taxon>
    </lineage>
</organism>